<dbReference type="EC" id="6.1.1.19" evidence="1"/>
<dbReference type="EMBL" id="AF222894">
    <property type="protein sequence ID" value="AAF30687.1"/>
    <property type="molecule type" value="Genomic_DNA"/>
</dbReference>
<dbReference type="RefSeq" id="WP_006688892.1">
    <property type="nucleotide sequence ID" value="NC_002162.1"/>
</dbReference>
<dbReference type="SMR" id="Q9PQL3"/>
<dbReference type="STRING" id="273119.UU278"/>
<dbReference type="EnsemblBacteria" id="AAF30687">
    <property type="protein sequence ID" value="AAF30687"/>
    <property type="gene ID" value="UU278"/>
</dbReference>
<dbReference type="GeneID" id="29672519"/>
<dbReference type="KEGG" id="uur:UU278"/>
<dbReference type="eggNOG" id="COG0018">
    <property type="taxonomic scope" value="Bacteria"/>
</dbReference>
<dbReference type="HOGENOM" id="CLU_006406_0_1_14"/>
<dbReference type="OrthoDB" id="9805987at2"/>
<dbReference type="Proteomes" id="UP000000423">
    <property type="component" value="Chromosome"/>
</dbReference>
<dbReference type="GO" id="GO:0005737">
    <property type="term" value="C:cytoplasm"/>
    <property type="evidence" value="ECO:0007669"/>
    <property type="project" value="UniProtKB-SubCell"/>
</dbReference>
<dbReference type="GO" id="GO:0004814">
    <property type="term" value="F:arginine-tRNA ligase activity"/>
    <property type="evidence" value="ECO:0007669"/>
    <property type="project" value="UniProtKB-UniRule"/>
</dbReference>
<dbReference type="GO" id="GO:0005524">
    <property type="term" value="F:ATP binding"/>
    <property type="evidence" value="ECO:0007669"/>
    <property type="project" value="UniProtKB-UniRule"/>
</dbReference>
<dbReference type="GO" id="GO:0006420">
    <property type="term" value="P:arginyl-tRNA aminoacylation"/>
    <property type="evidence" value="ECO:0007669"/>
    <property type="project" value="UniProtKB-UniRule"/>
</dbReference>
<dbReference type="CDD" id="cd00671">
    <property type="entry name" value="ArgRS_core"/>
    <property type="match status" value="1"/>
</dbReference>
<dbReference type="FunFam" id="3.40.50.620:FF:000062">
    <property type="entry name" value="Arginine--tRNA ligase"/>
    <property type="match status" value="1"/>
</dbReference>
<dbReference type="Gene3D" id="3.30.1360.70">
    <property type="entry name" value="Arginyl tRNA synthetase N-terminal domain"/>
    <property type="match status" value="1"/>
</dbReference>
<dbReference type="Gene3D" id="3.40.50.620">
    <property type="entry name" value="HUPs"/>
    <property type="match status" value="1"/>
</dbReference>
<dbReference type="Gene3D" id="1.10.730.10">
    <property type="entry name" value="Isoleucyl-tRNA Synthetase, Domain 1"/>
    <property type="match status" value="1"/>
</dbReference>
<dbReference type="HAMAP" id="MF_00123">
    <property type="entry name" value="Arg_tRNA_synth"/>
    <property type="match status" value="1"/>
</dbReference>
<dbReference type="InterPro" id="IPR001278">
    <property type="entry name" value="Arg-tRNA-ligase"/>
</dbReference>
<dbReference type="InterPro" id="IPR005148">
    <property type="entry name" value="Arg-tRNA-synth_N"/>
</dbReference>
<dbReference type="InterPro" id="IPR036695">
    <property type="entry name" value="Arg-tRNA-synth_N_sf"/>
</dbReference>
<dbReference type="InterPro" id="IPR035684">
    <property type="entry name" value="ArgRS_core"/>
</dbReference>
<dbReference type="InterPro" id="IPR008909">
    <property type="entry name" value="DALR_anticod-bd"/>
</dbReference>
<dbReference type="InterPro" id="IPR014729">
    <property type="entry name" value="Rossmann-like_a/b/a_fold"/>
</dbReference>
<dbReference type="InterPro" id="IPR009080">
    <property type="entry name" value="tRNAsynth_Ia_anticodon-bd"/>
</dbReference>
<dbReference type="NCBIfam" id="TIGR00456">
    <property type="entry name" value="argS"/>
    <property type="match status" value="1"/>
</dbReference>
<dbReference type="PANTHER" id="PTHR11956:SF5">
    <property type="entry name" value="ARGININE--TRNA LIGASE, CYTOPLASMIC"/>
    <property type="match status" value="1"/>
</dbReference>
<dbReference type="PANTHER" id="PTHR11956">
    <property type="entry name" value="ARGINYL-TRNA SYNTHETASE"/>
    <property type="match status" value="1"/>
</dbReference>
<dbReference type="Pfam" id="PF03485">
    <property type="entry name" value="Arg_tRNA_synt_N"/>
    <property type="match status" value="1"/>
</dbReference>
<dbReference type="Pfam" id="PF05746">
    <property type="entry name" value="DALR_1"/>
    <property type="match status" value="1"/>
</dbReference>
<dbReference type="Pfam" id="PF00750">
    <property type="entry name" value="tRNA-synt_1d"/>
    <property type="match status" value="1"/>
</dbReference>
<dbReference type="PRINTS" id="PR01038">
    <property type="entry name" value="TRNASYNTHARG"/>
</dbReference>
<dbReference type="SMART" id="SM01016">
    <property type="entry name" value="Arg_tRNA_synt_N"/>
    <property type="match status" value="1"/>
</dbReference>
<dbReference type="SMART" id="SM00836">
    <property type="entry name" value="DALR_1"/>
    <property type="match status" value="1"/>
</dbReference>
<dbReference type="SUPFAM" id="SSF47323">
    <property type="entry name" value="Anticodon-binding domain of a subclass of class I aminoacyl-tRNA synthetases"/>
    <property type="match status" value="1"/>
</dbReference>
<dbReference type="SUPFAM" id="SSF55190">
    <property type="entry name" value="Arginyl-tRNA synthetase (ArgRS), N-terminal 'additional' domain"/>
    <property type="match status" value="1"/>
</dbReference>
<dbReference type="SUPFAM" id="SSF52374">
    <property type="entry name" value="Nucleotidylyl transferase"/>
    <property type="match status" value="1"/>
</dbReference>
<sequence length="550" mass="63662">MITQKISEELNKALAKMGIHDTQETKILVDKTKNIKFGDFYTNIAMILSKKNNKSSLEIAKEIANNFEQDLFLEVNLQPPGFLNFKLKAKDHENLLKQIYYEKDRFGQFSKKNITYNIEYVSANPTGYLHIAHAANAIYGDILANLLKIYGYDVETEYWINDAGNQIDKLAMSVLVRYLQLQNINIQLPADAYHGQEIHLVAQTLYQTYKNQFINVRLNEKYEIDDDIANQEIKNFAVKYLLNEIKNDLASINTFIDTYTSENWIRNSGRILEVLSKIKPYTYTLDGALWLKTTTFGDDKDRVLIKSDGSYTYFTPDIAYHDYKFNKTNTTKLIDVWGTDHLGYIARLKAAMNALGYDPNNLEIVCAQVMKLVKNNQEFKLSKRSGQSLTIKDLVEIIGKDALRWFLGSSSMNSHVIIDVDIALSKNNNNPLYYVQYAHARANQVLNKQVYELDFKTDLLTETRERELLNQLHFYKQTIANAANNREPHRISNYLYDLAQIFHNYYANVKINNDNNKVLSAQRYTLVWCVKQVLANGLAIMKITPYDQMY</sequence>
<feature type="chain" id="PRO_0000151631" description="Arginine--tRNA ligase">
    <location>
        <begin position="1"/>
        <end position="550"/>
    </location>
</feature>
<feature type="short sequence motif" description="'HIGH' region">
    <location>
        <begin position="123"/>
        <end position="133"/>
    </location>
</feature>
<accession>Q9PQL3</accession>
<reference key="1">
    <citation type="journal article" date="2000" name="Nature">
        <title>The complete sequence of the mucosal pathogen Ureaplasma urealyticum.</title>
        <authorList>
            <person name="Glass J.I."/>
            <person name="Lefkowitz E.J."/>
            <person name="Glass J.S."/>
            <person name="Heiner C.R."/>
            <person name="Chen E.Y."/>
            <person name="Cassell G.H."/>
        </authorList>
    </citation>
    <scope>NUCLEOTIDE SEQUENCE [LARGE SCALE GENOMIC DNA]</scope>
    <source>
        <strain>ATCC 700970</strain>
    </source>
</reference>
<organism>
    <name type="scientific">Ureaplasma parvum serovar 3 (strain ATCC 700970)</name>
    <dbReference type="NCBI Taxonomy" id="273119"/>
    <lineage>
        <taxon>Bacteria</taxon>
        <taxon>Bacillati</taxon>
        <taxon>Mycoplasmatota</taxon>
        <taxon>Mycoplasmoidales</taxon>
        <taxon>Mycoplasmoidaceae</taxon>
        <taxon>Ureaplasma</taxon>
    </lineage>
</organism>
<keyword id="KW-0030">Aminoacyl-tRNA synthetase</keyword>
<keyword id="KW-0067">ATP-binding</keyword>
<keyword id="KW-0963">Cytoplasm</keyword>
<keyword id="KW-0436">Ligase</keyword>
<keyword id="KW-0547">Nucleotide-binding</keyword>
<keyword id="KW-0648">Protein biosynthesis</keyword>
<keyword id="KW-1185">Reference proteome</keyword>
<evidence type="ECO:0000255" key="1">
    <source>
        <dbReference type="HAMAP-Rule" id="MF_00123"/>
    </source>
</evidence>
<name>SYR_UREPA</name>
<protein>
    <recommendedName>
        <fullName evidence="1">Arginine--tRNA ligase</fullName>
        <ecNumber evidence="1">6.1.1.19</ecNumber>
    </recommendedName>
    <alternativeName>
        <fullName evidence="1">Arginyl-tRNA synthetase</fullName>
        <shortName evidence="1">ArgRS</shortName>
    </alternativeName>
</protein>
<proteinExistence type="inferred from homology"/>
<comment type="catalytic activity">
    <reaction evidence="1">
        <text>tRNA(Arg) + L-arginine + ATP = L-arginyl-tRNA(Arg) + AMP + diphosphate</text>
        <dbReference type="Rhea" id="RHEA:20301"/>
        <dbReference type="Rhea" id="RHEA-COMP:9658"/>
        <dbReference type="Rhea" id="RHEA-COMP:9673"/>
        <dbReference type="ChEBI" id="CHEBI:30616"/>
        <dbReference type="ChEBI" id="CHEBI:32682"/>
        <dbReference type="ChEBI" id="CHEBI:33019"/>
        <dbReference type="ChEBI" id="CHEBI:78442"/>
        <dbReference type="ChEBI" id="CHEBI:78513"/>
        <dbReference type="ChEBI" id="CHEBI:456215"/>
        <dbReference type="EC" id="6.1.1.19"/>
    </reaction>
</comment>
<comment type="subunit">
    <text evidence="1">Monomer.</text>
</comment>
<comment type="subcellular location">
    <subcellularLocation>
        <location evidence="1">Cytoplasm</location>
    </subcellularLocation>
</comment>
<comment type="similarity">
    <text evidence="1">Belongs to the class-I aminoacyl-tRNA synthetase family.</text>
</comment>
<gene>
    <name evidence="1" type="primary">argS</name>
    <name type="ordered locus">UU278</name>
</gene>